<feature type="chain" id="PRO_0000289532" description="GTP cyclohydrolase FolE2">
    <location>
        <begin position="1"/>
        <end position="305"/>
    </location>
</feature>
<feature type="site" description="May be catalytically important" evidence="1">
    <location>
        <position position="153"/>
    </location>
</feature>
<accession>Q3BUL9</accession>
<dbReference type="EC" id="3.5.4.16" evidence="1"/>
<dbReference type="EMBL" id="AM039952">
    <property type="protein sequence ID" value="CAJ23490.1"/>
    <property type="molecule type" value="Genomic_DNA"/>
</dbReference>
<dbReference type="RefSeq" id="WP_011347140.1">
    <property type="nucleotide sequence ID" value="NZ_CP017190.1"/>
</dbReference>
<dbReference type="SMR" id="Q3BUL9"/>
<dbReference type="STRING" id="456327.BJD11_13455"/>
<dbReference type="KEGG" id="xcv:XCV1813"/>
<dbReference type="eggNOG" id="COG1469">
    <property type="taxonomic scope" value="Bacteria"/>
</dbReference>
<dbReference type="HOGENOM" id="CLU_062816_0_0_6"/>
<dbReference type="UniPathway" id="UPA00848">
    <property type="reaction ID" value="UER00151"/>
</dbReference>
<dbReference type="Proteomes" id="UP000007069">
    <property type="component" value="Chromosome"/>
</dbReference>
<dbReference type="GO" id="GO:0003934">
    <property type="term" value="F:GTP cyclohydrolase I activity"/>
    <property type="evidence" value="ECO:0007669"/>
    <property type="project" value="UniProtKB-UniRule"/>
</dbReference>
<dbReference type="GO" id="GO:0046654">
    <property type="term" value="P:tetrahydrofolate biosynthetic process"/>
    <property type="evidence" value="ECO:0007669"/>
    <property type="project" value="UniProtKB-UniRule"/>
</dbReference>
<dbReference type="Gene3D" id="3.10.270.10">
    <property type="entry name" value="Urate Oxidase"/>
    <property type="match status" value="1"/>
</dbReference>
<dbReference type="HAMAP" id="MF_01527_B">
    <property type="entry name" value="GTP_cyclohydrol_B"/>
    <property type="match status" value="1"/>
</dbReference>
<dbReference type="InterPro" id="IPR022838">
    <property type="entry name" value="GTP_cyclohydrolase_FolE2"/>
</dbReference>
<dbReference type="InterPro" id="IPR003801">
    <property type="entry name" value="GTP_cyclohydrolase_FolE2/MptA"/>
</dbReference>
<dbReference type="NCBIfam" id="NF010200">
    <property type="entry name" value="PRK13674.1-1"/>
    <property type="match status" value="1"/>
</dbReference>
<dbReference type="PANTHER" id="PTHR36445">
    <property type="entry name" value="GTP CYCLOHYDROLASE MPTA"/>
    <property type="match status" value="1"/>
</dbReference>
<dbReference type="PANTHER" id="PTHR36445:SF1">
    <property type="entry name" value="GTP CYCLOHYDROLASE MPTA"/>
    <property type="match status" value="1"/>
</dbReference>
<dbReference type="Pfam" id="PF02649">
    <property type="entry name" value="GCHY-1"/>
    <property type="match status" value="1"/>
</dbReference>
<evidence type="ECO:0000255" key="1">
    <source>
        <dbReference type="HAMAP-Rule" id="MF_01527"/>
    </source>
</evidence>
<protein>
    <recommendedName>
        <fullName evidence="1">GTP cyclohydrolase FolE2</fullName>
        <ecNumber evidence="1">3.5.4.16</ecNumber>
    </recommendedName>
</protein>
<sequence>MSATLPDVAVTEPSTLSAPLRWVGMQDIAIPVQLEAGGGQLAARASVQVDLPRAELKGIHMSRLYRLLDTQLQQPVSPAMLSGLLQALIESHADCASRAARLTLSGELMLRTPALRSEGLSGWRAYPVHIAAQCSAGRTTIQLQAEVLYASTCPCSAALSRQLLSDAFVQQHAGRDALALDEVAQWLQDHGSYATPHSQRSVAQVRVELPADAQRLAIRQLVGLCEQALATPVQAAVRRPDEQAFARLNGANLMYVEDAARRLRQQLAEHYAAFHVAVRHLESLHAHDAVAETDSDDAVLGPTTM</sequence>
<gene>
    <name evidence="1" type="primary">folE2</name>
    <name type="ordered locus">XCV1813</name>
</gene>
<proteinExistence type="inferred from homology"/>
<reference key="1">
    <citation type="journal article" date="2005" name="J. Bacteriol.">
        <title>Insights into genome plasticity and pathogenicity of the plant pathogenic Bacterium Xanthomonas campestris pv. vesicatoria revealed by the complete genome sequence.</title>
        <authorList>
            <person name="Thieme F."/>
            <person name="Koebnik R."/>
            <person name="Bekel T."/>
            <person name="Berger C."/>
            <person name="Boch J."/>
            <person name="Buettner D."/>
            <person name="Caldana C."/>
            <person name="Gaigalat L."/>
            <person name="Goesmann A."/>
            <person name="Kay S."/>
            <person name="Kirchner O."/>
            <person name="Lanz C."/>
            <person name="Linke B."/>
            <person name="McHardy A.C."/>
            <person name="Meyer F."/>
            <person name="Mittenhuber G."/>
            <person name="Nies D.H."/>
            <person name="Niesbach-Kloesgen U."/>
            <person name="Patschkowski T."/>
            <person name="Rueckert C."/>
            <person name="Rupp O."/>
            <person name="Schneiker S."/>
            <person name="Schuster S.C."/>
            <person name="Vorhoelter F.J."/>
            <person name="Weber E."/>
            <person name="Puehler A."/>
            <person name="Bonas U."/>
            <person name="Bartels D."/>
            <person name="Kaiser O."/>
        </authorList>
    </citation>
    <scope>NUCLEOTIDE SEQUENCE [LARGE SCALE GENOMIC DNA]</scope>
    <source>
        <strain>85-10</strain>
    </source>
</reference>
<keyword id="KW-0378">Hydrolase</keyword>
<name>GCH4_XANE5</name>
<comment type="function">
    <text evidence="1">Converts GTP to 7,8-dihydroneopterin triphosphate.</text>
</comment>
<comment type="catalytic activity">
    <reaction evidence="1">
        <text>GTP + H2O = 7,8-dihydroneopterin 3'-triphosphate + formate + H(+)</text>
        <dbReference type="Rhea" id="RHEA:17473"/>
        <dbReference type="ChEBI" id="CHEBI:15377"/>
        <dbReference type="ChEBI" id="CHEBI:15378"/>
        <dbReference type="ChEBI" id="CHEBI:15740"/>
        <dbReference type="ChEBI" id="CHEBI:37565"/>
        <dbReference type="ChEBI" id="CHEBI:58462"/>
        <dbReference type="EC" id="3.5.4.16"/>
    </reaction>
</comment>
<comment type="pathway">
    <text evidence="1">Cofactor biosynthesis; 7,8-dihydroneopterin triphosphate biosynthesis; 7,8-dihydroneopterin triphosphate from GTP: step 1/1.</text>
</comment>
<comment type="similarity">
    <text evidence="1">Belongs to the GTP cyclohydrolase IV family.</text>
</comment>
<organism>
    <name type="scientific">Xanthomonas euvesicatoria pv. vesicatoria (strain 85-10)</name>
    <name type="common">Xanthomonas campestris pv. vesicatoria</name>
    <dbReference type="NCBI Taxonomy" id="316273"/>
    <lineage>
        <taxon>Bacteria</taxon>
        <taxon>Pseudomonadati</taxon>
        <taxon>Pseudomonadota</taxon>
        <taxon>Gammaproteobacteria</taxon>
        <taxon>Lysobacterales</taxon>
        <taxon>Lysobacteraceae</taxon>
        <taxon>Xanthomonas</taxon>
    </lineage>
</organism>